<sequence length="84" mass="9726">MAKQVKRKRRPQIKINTFCRFTAAGITRIDYKDVDTLLKNINESGKITPSRMTGTSAKFQRQLTTAIKRARFLALIPYTDKHKK</sequence>
<gene>
    <name evidence="1" type="primary">rpsR</name>
    <name type="ordered locus">Rmag_0665</name>
</gene>
<feature type="chain" id="PRO_0000345540" description="Small ribosomal subunit protein bS18">
    <location>
        <begin position="1"/>
        <end position="84"/>
    </location>
</feature>
<protein>
    <recommendedName>
        <fullName evidence="1">Small ribosomal subunit protein bS18</fullName>
    </recommendedName>
    <alternativeName>
        <fullName evidence="2">30S ribosomal protein S18</fullName>
    </alternativeName>
</protein>
<accession>A1AWV0</accession>
<dbReference type="EMBL" id="CP000488">
    <property type="protein sequence ID" value="ABL02407.1"/>
    <property type="molecule type" value="Genomic_DNA"/>
</dbReference>
<dbReference type="RefSeq" id="WP_011738032.1">
    <property type="nucleotide sequence ID" value="NC_008610.1"/>
</dbReference>
<dbReference type="SMR" id="A1AWV0"/>
<dbReference type="STRING" id="413404.Rmag_0665"/>
<dbReference type="KEGG" id="rma:Rmag_0665"/>
<dbReference type="eggNOG" id="COG0238">
    <property type="taxonomic scope" value="Bacteria"/>
</dbReference>
<dbReference type="HOGENOM" id="CLU_148710_0_3_6"/>
<dbReference type="OrthoDB" id="9812008at2"/>
<dbReference type="Proteomes" id="UP000002587">
    <property type="component" value="Chromosome"/>
</dbReference>
<dbReference type="GO" id="GO:0022627">
    <property type="term" value="C:cytosolic small ribosomal subunit"/>
    <property type="evidence" value="ECO:0007669"/>
    <property type="project" value="TreeGrafter"/>
</dbReference>
<dbReference type="GO" id="GO:0070181">
    <property type="term" value="F:small ribosomal subunit rRNA binding"/>
    <property type="evidence" value="ECO:0007669"/>
    <property type="project" value="TreeGrafter"/>
</dbReference>
<dbReference type="GO" id="GO:0003735">
    <property type="term" value="F:structural constituent of ribosome"/>
    <property type="evidence" value="ECO:0007669"/>
    <property type="project" value="InterPro"/>
</dbReference>
<dbReference type="GO" id="GO:0006412">
    <property type="term" value="P:translation"/>
    <property type="evidence" value="ECO:0007669"/>
    <property type="project" value="UniProtKB-UniRule"/>
</dbReference>
<dbReference type="Gene3D" id="4.10.640.10">
    <property type="entry name" value="Ribosomal protein S18"/>
    <property type="match status" value="1"/>
</dbReference>
<dbReference type="HAMAP" id="MF_00270">
    <property type="entry name" value="Ribosomal_bS18"/>
    <property type="match status" value="1"/>
</dbReference>
<dbReference type="InterPro" id="IPR001648">
    <property type="entry name" value="Ribosomal_bS18"/>
</dbReference>
<dbReference type="InterPro" id="IPR036870">
    <property type="entry name" value="Ribosomal_bS18_sf"/>
</dbReference>
<dbReference type="NCBIfam" id="TIGR00165">
    <property type="entry name" value="S18"/>
    <property type="match status" value="1"/>
</dbReference>
<dbReference type="PANTHER" id="PTHR13479">
    <property type="entry name" value="30S RIBOSOMAL PROTEIN S18"/>
    <property type="match status" value="1"/>
</dbReference>
<dbReference type="PANTHER" id="PTHR13479:SF40">
    <property type="entry name" value="SMALL RIBOSOMAL SUBUNIT PROTEIN BS18M"/>
    <property type="match status" value="1"/>
</dbReference>
<dbReference type="Pfam" id="PF01084">
    <property type="entry name" value="Ribosomal_S18"/>
    <property type="match status" value="1"/>
</dbReference>
<dbReference type="PRINTS" id="PR00974">
    <property type="entry name" value="RIBOSOMALS18"/>
</dbReference>
<dbReference type="SUPFAM" id="SSF46911">
    <property type="entry name" value="Ribosomal protein S18"/>
    <property type="match status" value="1"/>
</dbReference>
<keyword id="KW-0687">Ribonucleoprotein</keyword>
<keyword id="KW-0689">Ribosomal protein</keyword>
<keyword id="KW-0694">RNA-binding</keyword>
<keyword id="KW-0699">rRNA-binding</keyword>
<evidence type="ECO:0000255" key="1">
    <source>
        <dbReference type="HAMAP-Rule" id="MF_00270"/>
    </source>
</evidence>
<evidence type="ECO:0000305" key="2"/>
<proteinExistence type="inferred from homology"/>
<reference key="1">
    <citation type="journal article" date="2007" name="Science">
        <title>The Calyptogena magnifica chemoautotrophic symbiont genome.</title>
        <authorList>
            <person name="Newton I.L.G."/>
            <person name="Woyke T."/>
            <person name="Auchtung T.A."/>
            <person name="Dilly G.F."/>
            <person name="Dutton R.J."/>
            <person name="Fisher M.C."/>
            <person name="Fontanez K.M."/>
            <person name="Lau E."/>
            <person name="Stewart F.J."/>
            <person name="Richardson P.M."/>
            <person name="Barry K.W."/>
            <person name="Saunders E."/>
            <person name="Detter J.C."/>
            <person name="Wu D."/>
            <person name="Eisen J.A."/>
            <person name="Cavanaugh C.M."/>
        </authorList>
    </citation>
    <scope>NUCLEOTIDE SEQUENCE [LARGE SCALE GENOMIC DNA]</scope>
</reference>
<name>RS18_RUTMC</name>
<comment type="function">
    <text evidence="1">Binds as a heterodimer with protein bS6 to the central domain of the 16S rRNA, where it helps stabilize the platform of the 30S subunit.</text>
</comment>
<comment type="subunit">
    <text evidence="1">Part of the 30S ribosomal subunit. Forms a tight heterodimer with protein bS6.</text>
</comment>
<comment type="similarity">
    <text evidence="1">Belongs to the bacterial ribosomal protein bS18 family.</text>
</comment>
<organism>
    <name type="scientific">Ruthia magnifica subsp. Calyptogena magnifica</name>
    <dbReference type="NCBI Taxonomy" id="413404"/>
    <lineage>
        <taxon>Bacteria</taxon>
        <taxon>Pseudomonadati</taxon>
        <taxon>Pseudomonadota</taxon>
        <taxon>Gammaproteobacteria</taxon>
        <taxon>Candidatus Pseudothioglobaceae</taxon>
        <taxon>Candidatus Ruthturnera</taxon>
    </lineage>
</organism>